<name>FB237_ARATH</name>
<evidence type="ECO:0000255" key="1">
    <source>
        <dbReference type="PROSITE-ProRule" id="PRU00080"/>
    </source>
</evidence>
<dbReference type="EMBL" id="AL021710">
    <property type="protein sequence ID" value="CAA16718.1"/>
    <property type="molecule type" value="Genomic_DNA"/>
</dbReference>
<dbReference type="EMBL" id="AL161548">
    <property type="protein sequence ID" value="CAB78840.1"/>
    <property type="molecule type" value="Genomic_DNA"/>
</dbReference>
<dbReference type="EMBL" id="CP002687">
    <property type="protein sequence ID" value="AEE84037.1"/>
    <property type="molecule type" value="Genomic_DNA"/>
</dbReference>
<dbReference type="EMBL" id="CP002687">
    <property type="protein sequence ID" value="AEE84038.1"/>
    <property type="molecule type" value="Genomic_DNA"/>
</dbReference>
<dbReference type="EMBL" id="BT029547">
    <property type="protein sequence ID" value="ABL66803.1"/>
    <property type="molecule type" value="mRNA"/>
</dbReference>
<dbReference type="PIR" id="T04534">
    <property type="entry name" value="T04534"/>
</dbReference>
<dbReference type="RefSeq" id="NP_001190761.1">
    <property type="nucleotide sequence ID" value="NM_001203832.1"/>
</dbReference>
<dbReference type="RefSeq" id="NP_193573.1">
    <property type="nucleotide sequence ID" value="NM_117949.3"/>
</dbReference>
<dbReference type="BioGRID" id="12860">
    <property type="interactions" value="1"/>
</dbReference>
<dbReference type="FunCoup" id="O49508">
    <property type="interactions" value="1334"/>
</dbReference>
<dbReference type="PaxDb" id="3702-AT4G18380.1"/>
<dbReference type="ProteomicsDB" id="231019"/>
<dbReference type="EnsemblPlants" id="AT4G18380.1">
    <property type="protein sequence ID" value="AT4G18380.1"/>
    <property type="gene ID" value="AT4G18380"/>
</dbReference>
<dbReference type="EnsemblPlants" id="AT4G18380.2">
    <property type="protein sequence ID" value="AT4G18380.2"/>
    <property type="gene ID" value="AT4G18380"/>
</dbReference>
<dbReference type="GeneID" id="827567"/>
<dbReference type="Gramene" id="AT4G18380.1">
    <property type="protein sequence ID" value="AT4G18380.1"/>
    <property type="gene ID" value="AT4G18380"/>
</dbReference>
<dbReference type="Gramene" id="AT4G18380.2">
    <property type="protein sequence ID" value="AT4G18380.2"/>
    <property type="gene ID" value="AT4G18380"/>
</dbReference>
<dbReference type="KEGG" id="ath:AT4G18380"/>
<dbReference type="Araport" id="AT4G18380"/>
<dbReference type="TAIR" id="AT4G18380"/>
<dbReference type="eggNOG" id="ENOG502QTRT">
    <property type="taxonomic scope" value="Eukaryota"/>
</dbReference>
<dbReference type="HOGENOM" id="CLU_049279_2_0_1"/>
<dbReference type="InParanoid" id="O49508"/>
<dbReference type="OMA" id="WYAPRLE"/>
<dbReference type="PhylomeDB" id="O49508"/>
<dbReference type="PRO" id="PR:O49508"/>
<dbReference type="Proteomes" id="UP000006548">
    <property type="component" value="Chromosome 4"/>
</dbReference>
<dbReference type="ExpressionAtlas" id="O49508">
    <property type="expression patterns" value="baseline and differential"/>
</dbReference>
<dbReference type="Gene3D" id="1.20.1280.50">
    <property type="match status" value="1"/>
</dbReference>
<dbReference type="InterPro" id="IPR044809">
    <property type="entry name" value="AUF1-like"/>
</dbReference>
<dbReference type="InterPro" id="IPR036047">
    <property type="entry name" value="F-box-like_dom_sf"/>
</dbReference>
<dbReference type="InterPro" id="IPR001810">
    <property type="entry name" value="F-box_dom"/>
</dbReference>
<dbReference type="PANTHER" id="PTHR31215">
    <property type="entry name" value="OS05G0510400 PROTEIN-RELATED"/>
    <property type="match status" value="1"/>
</dbReference>
<dbReference type="Pfam" id="PF12937">
    <property type="entry name" value="F-box-like"/>
    <property type="match status" value="1"/>
</dbReference>
<dbReference type="SUPFAM" id="SSF81383">
    <property type="entry name" value="F-box domain"/>
    <property type="match status" value="1"/>
</dbReference>
<dbReference type="PROSITE" id="PS50181">
    <property type="entry name" value="FBOX"/>
    <property type="match status" value="1"/>
</dbReference>
<feature type="chain" id="PRO_0000283504" description="F-box protein At4g18380">
    <location>
        <begin position="1"/>
        <end position="380"/>
    </location>
</feature>
<feature type="domain" description="F-box" evidence="1">
    <location>
        <begin position="22"/>
        <end position="70"/>
    </location>
</feature>
<proteinExistence type="evidence at transcript level"/>
<sequence length="380" mass="41161">MAIILRSSDPLLSRIHPEPQEIDHFDNLPDSILLLIFNNIGDVKALGRCSVVSKRFHSLIPQVENVFVRVDCVISDDDSSSLLSDKPRSASAASPFSAIFRLVFKPLQALGQFLKRSGSSSLPSGSSPSSLLISGGDDGEIEQGGVTHHSPTQVLKNFDEIKFLKIELPSGELGIDDGVLLKWRAEFGSTLENCVILGASSVIPPTNSDKTEASSAPVAAVEDNGSIPESFYTNGGLKLRVVWTISSLIAASARHYLLQPIIAEHKTLDSLVLTDVDGQGVLCMNRDQLEELRVKPLSASSASKRTLVPALNMRLWYAPSLELPDGTVLKGATLVAIRPSESKKEVCDVSWVSSAFDEPYGVAAKMLVKRRTYCLEMNSF</sequence>
<keyword id="KW-1185">Reference proteome</keyword>
<reference key="1">
    <citation type="journal article" date="1999" name="Nature">
        <title>Sequence and analysis of chromosome 4 of the plant Arabidopsis thaliana.</title>
        <authorList>
            <person name="Mayer K.F.X."/>
            <person name="Schueller C."/>
            <person name="Wambutt R."/>
            <person name="Murphy G."/>
            <person name="Volckaert G."/>
            <person name="Pohl T."/>
            <person name="Duesterhoeft A."/>
            <person name="Stiekema W."/>
            <person name="Entian K.-D."/>
            <person name="Terryn N."/>
            <person name="Harris B."/>
            <person name="Ansorge W."/>
            <person name="Brandt P."/>
            <person name="Grivell L.A."/>
            <person name="Rieger M."/>
            <person name="Weichselgartner M."/>
            <person name="de Simone V."/>
            <person name="Obermaier B."/>
            <person name="Mache R."/>
            <person name="Mueller M."/>
            <person name="Kreis M."/>
            <person name="Delseny M."/>
            <person name="Puigdomenech P."/>
            <person name="Watson M."/>
            <person name="Schmidtheini T."/>
            <person name="Reichert B."/>
            <person name="Portetelle D."/>
            <person name="Perez-Alonso M."/>
            <person name="Boutry M."/>
            <person name="Bancroft I."/>
            <person name="Vos P."/>
            <person name="Hoheisel J."/>
            <person name="Zimmermann W."/>
            <person name="Wedler H."/>
            <person name="Ridley P."/>
            <person name="Langham S.-A."/>
            <person name="McCullagh B."/>
            <person name="Bilham L."/>
            <person name="Robben J."/>
            <person name="van der Schueren J."/>
            <person name="Grymonprez B."/>
            <person name="Chuang Y.-J."/>
            <person name="Vandenbussche F."/>
            <person name="Braeken M."/>
            <person name="Weltjens I."/>
            <person name="Voet M."/>
            <person name="Bastiaens I."/>
            <person name="Aert R."/>
            <person name="Defoor E."/>
            <person name="Weitzenegger T."/>
            <person name="Bothe G."/>
            <person name="Ramsperger U."/>
            <person name="Hilbert H."/>
            <person name="Braun M."/>
            <person name="Holzer E."/>
            <person name="Brandt A."/>
            <person name="Peters S."/>
            <person name="van Staveren M."/>
            <person name="Dirkse W."/>
            <person name="Mooijman P."/>
            <person name="Klein Lankhorst R."/>
            <person name="Rose M."/>
            <person name="Hauf J."/>
            <person name="Koetter P."/>
            <person name="Berneiser S."/>
            <person name="Hempel S."/>
            <person name="Feldpausch M."/>
            <person name="Lamberth S."/>
            <person name="Van den Daele H."/>
            <person name="De Keyser A."/>
            <person name="Buysshaert C."/>
            <person name="Gielen J."/>
            <person name="Villarroel R."/>
            <person name="De Clercq R."/>
            <person name="van Montagu M."/>
            <person name="Rogers J."/>
            <person name="Cronin A."/>
            <person name="Quail M.A."/>
            <person name="Bray-Allen S."/>
            <person name="Clark L."/>
            <person name="Doggett J."/>
            <person name="Hall S."/>
            <person name="Kay M."/>
            <person name="Lennard N."/>
            <person name="McLay K."/>
            <person name="Mayes R."/>
            <person name="Pettett A."/>
            <person name="Rajandream M.A."/>
            <person name="Lyne M."/>
            <person name="Benes V."/>
            <person name="Rechmann S."/>
            <person name="Borkova D."/>
            <person name="Bloecker H."/>
            <person name="Scharfe M."/>
            <person name="Grimm M."/>
            <person name="Loehnert T.-H."/>
            <person name="Dose S."/>
            <person name="de Haan M."/>
            <person name="Maarse A.C."/>
            <person name="Schaefer M."/>
            <person name="Mueller-Auer S."/>
            <person name="Gabel C."/>
            <person name="Fuchs M."/>
            <person name="Fartmann B."/>
            <person name="Granderath K."/>
            <person name="Dauner D."/>
            <person name="Herzl A."/>
            <person name="Neumann S."/>
            <person name="Argiriou A."/>
            <person name="Vitale D."/>
            <person name="Liguori R."/>
            <person name="Piravandi E."/>
            <person name="Massenet O."/>
            <person name="Quigley F."/>
            <person name="Clabauld G."/>
            <person name="Muendlein A."/>
            <person name="Felber R."/>
            <person name="Schnabl S."/>
            <person name="Hiller R."/>
            <person name="Schmidt W."/>
            <person name="Lecharny A."/>
            <person name="Aubourg S."/>
            <person name="Chefdor F."/>
            <person name="Cooke R."/>
            <person name="Berger C."/>
            <person name="Monfort A."/>
            <person name="Casacuberta E."/>
            <person name="Gibbons T."/>
            <person name="Weber N."/>
            <person name="Vandenbol M."/>
            <person name="Bargues M."/>
            <person name="Terol J."/>
            <person name="Torres A."/>
            <person name="Perez-Perez A."/>
            <person name="Purnelle B."/>
            <person name="Bent E."/>
            <person name="Johnson S."/>
            <person name="Tacon D."/>
            <person name="Jesse T."/>
            <person name="Heijnen L."/>
            <person name="Schwarz S."/>
            <person name="Scholler P."/>
            <person name="Heber S."/>
            <person name="Francs P."/>
            <person name="Bielke C."/>
            <person name="Frishman D."/>
            <person name="Haase D."/>
            <person name="Lemcke K."/>
            <person name="Mewes H.-W."/>
            <person name="Stocker S."/>
            <person name="Zaccaria P."/>
            <person name="Bevan M."/>
            <person name="Wilson R.K."/>
            <person name="de la Bastide M."/>
            <person name="Habermann K."/>
            <person name="Parnell L."/>
            <person name="Dedhia N."/>
            <person name="Gnoj L."/>
            <person name="Schutz K."/>
            <person name="Huang E."/>
            <person name="Spiegel L."/>
            <person name="Sekhon M."/>
            <person name="Murray J."/>
            <person name="Sheet P."/>
            <person name="Cordes M."/>
            <person name="Abu-Threideh J."/>
            <person name="Stoneking T."/>
            <person name="Kalicki J."/>
            <person name="Graves T."/>
            <person name="Harmon G."/>
            <person name="Edwards J."/>
            <person name="Latreille P."/>
            <person name="Courtney L."/>
            <person name="Cloud J."/>
            <person name="Abbott A."/>
            <person name="Scott K."/>
            <person name="Johnson D."/>
            <person name="Minx P."/>
            <person name="Bentley D."/>
            <person name="Fulton B."/>
            <person name="Miller N."/>
            <person name="Greco T."/>
            <person name="Kemp K."/>
            <person name="Kramer J."/>
            <person name="Fulton L."/>
            <person name="Mardis E."/>
            <person name="Dante M."/>
            <person name="Pepin K."/>
            <person name="Hillier L.W."/>
            <person name="Nelson J."/>
            <person name="Spieth J."/>
            <person name="Ryan E."/>
            <person name="Andrews S."/>
            <person name="Geisel C."/>
            <person name="Layman D."/>
            <person name="Du H."/>
            <person name="Ali J."/>
            <person name="Berghoff A."/>
            <person name="Jones K."/>
            <person name="Drone K."/>
            <person name="Cotton M."/>
            <person name="Joshu C."/>
            <person name="Antonoiu B."/>
            <person name="Zidanic M."/>
            <person name="Strong C."/>
            <person name="Sun H."/>
            <person name="Lamar B."/>
            <person name="Yordan C."/>
            <person name="Ma P."/>
            <person name="Zhong J."/>
            <person name="Preston R."/>
            <person name="Vil D."/>
            <person name="Shekher M."/>
            <person name="Matero A."/>
            <person name="Shah R."/>
            <person name="Swaby I.K."/>
            <person name="O'Shaughnessy A."/>
            <person name="Rodriguez M."/>
            <person name="Hoffman J."/>
            <person name="Till S."/>
            <person name="Granat S."/>
            <person name="Shohdy N."/>
            <person name="Hasegawa A."/>
            <person name="Hameed A."/>
            <person name="Lodhi M."/>
            <person name="Johnson A."/>
            <person name="Chen E."/>
            <person name="Marra M.A."/>
            <person name="Martienssen R."/>
            <person name="McCombie W.R."/>
        </authorList>
    </citation>
    <scope>NUCLEOTIDE SEQUENCE [LARGE SCALE GENOMIC DNA]</scope>
    <source>
        <strain>cv. Columbia</strain>
    </source>
</reference>
<reference key="2">
    <citation type="journal article" date="2017" name="Plant J.">
        <title>Araport11: a complete reannotation of the Arabidopsis thaliana reference genome.</title>
        <authorList>
            <person name="Cheng C.Y."/>
            <person name="Krishnakumar V."/>
            <person name="Chan A.P."/>
            <person name="Thibaud-Nissen F."/>
            <person name="Schobel S."/>
            <person name="Town C.D."/>
        </authorList>
    </citation>
    <scope>GENOME REANNOTATION</scope>
    <source>
        <strain>cv. Columbia</strain>
    </source>
</reference>
<reference key="3">
    <citation type="submission" date="2006-12" db="EMBL/GenBank/DDBJ databases">
        <title>Arabidopsis ORF clones.</title>
        <authorList>
            <person name="Bautista V.R."/>
            <person name="Kim C.J."/>
            <person name="Chen H."/>
            <person name="Quinitio C."/>
            <person name="Ecker J.R."/>
        </authorList>
    </citation>
    <scope>NUCLEOTIDE SEQUENCE [LARGE SCALE MRNA]</scope>
    <source>
        <strain>cv. Columbia</strain>
    </source>
</reference>
<accession>O49508</accession>
<protein>
    <recommendedName>
        <fullName>F-box protein At4g18380</fullName>
    </recommendedName>
</protein>
<organism>
    <name type="scientific">Arabidopsis thaliana</name>
    <name type="common">Mouse-ear cress</name>
    <dbReference type="NCBI Taxonomy" id="3702"/>
    <lineage>
        <taxon>Eukaryota</taxon>
        <taxon>Viridiplantae</taxon>
        <taxon>Streptophyta</taxon>
        <taxon>Embryophyta</taxon>
        <taxon>Tracheophyta</taxon>
        <taxon>Spermatophyta</taxon>
        <taxon>Magnoliopsida</taxon>
        <taxon>eudicotyledons</taxon>
        <taxon>Gunneridae</taxon>
        <taxon>Pentapetalae</taxon>
        <taxon>rosids</taxon>
        <taxon>malvids</taxon>
        <taxon>Brassicales</taxon>
        <taxon>Brassicaceae</taxon>
        <taxon>Camelineae</taxon>
        <taxon>Arabidopsis</taxon>
    </lineage>
</organism>
<gene>
    <name type="ordered locus">At4g18380</name>
    <name type="ORF">F28J12.40</name>
</gene>